<organism>
    <name type="scientific">Streptococcus pyogenes serotype M28 (strain MGAS6180)</name>
    <dbReference type="NCBI Taxonomy" id="319701"/>
    <lineage>
        <taxon>Bacteria</taxon>
        <taxon>Bacillati</taxon>
        <taxon>Bacillota</taxon>
        <taxon>Bacilli</taxon>
        <taxon>Lactobacillales</taxon>
        <taxon>Streptococcaceae</taxon>
        <taxon>Streptococcus</taxon>
    </lineage>
</organism>
<name>RL16_STRPM</name>
<sequence length="137" mass="15452">MLVPKRVKHRREFRGKMRGEAKGGKEVSFGEYGLQATTSHWITNRQIEAARIAMTRYMKRGGKVWIKIFPHKSYTAKAIGVRMGSGKGAPEGWVAPVKRGKVMFEIAGVSEEIAREALRLASHKLPVKCKFVKREAE</sequence>
<comment type="function">
    <text evidence="1">Binds 23S rRNA and is also seen to make contacts with the A and possibly P site tRNAs.</text>
</comment>
<comment type="subunit">
    <text evidence="1">Part of the 50S ribosomal subunit.</text>
</comment>
<comment type="similarity">
    <text evidence="1">Belongs to the universal ribosomal protein uL16 family.</text>
</comment>
<accession>Q48VU2</accession>
<dbReference type="EMBL" id="CP000056">
    <property type="protein sequence ID" value="AAX71164.1"/>
    <property type="molecule type" value="Genomic_DNA"/>
</dbReference>
<dbReference type="RefSeq" id="WP_002986644.1">
    <property type="nucleotide sequence ID" value="NC_007296.2"/>
</dbReference>
<dbReference type="SMR" id="Q48VU2"/>
<dbReference type="GeneID" id="69900033"/>
<dbReference type="KEGG" id="spb:M28_Spy0050"/>
<dbReference type="HOGENOM" id="CLU_078858_2_1_9"/>
<dbReference type="GO" id="GO:0022625">
    <property type="term" value="C:cytosolic large ribosomal subunit"/>
    <property type="evidence" value="ECO:0007669"/>
    <property type="project" value="TreeGrafter"/>
</dbReference>
<dbReference type="GO" id="GO:0019843">
    <property type="term" value="F:rRNA binding"/>
    <property type="evidence" value="ECO:0007669"/>
    <property type="project" value="UniProtKB-UniRule"/>
</dbReference>
<dbReference type="GO" id="GO:0003735">
    <property type="term" value="F:structural constituent of ribosome"/>
    <property type="evidence" value="ECO:0007669"/>
    <property type="project" value="InterPro"/>
</dbReference>
<dbReference type="GO" id="GO:0000049">
    <property type="term" value="F:tRNA binding"/>
    <property type="evidence" value="ECO:0007669"/>
    <property type="project" value="UniProtKB-KW"/>
</dbReference>
<dbReference type="GO" id="GO:0006412">
    <property type="term" value="P:translation"/>
    <property type="evidence" value="ECO:0007669"/>
    <property type="project" value="UniProtKB-UniRule"/>
</dbReference>
<dbReference type="CDD" id="cd01433">
    <property type="entry name" value="Ribosomal_L16_L10e"/>
    <property type="match status" value="1"/>
</dbReference>
<dbReference type="FunFam" id="3.90.1170.10:FF:000001">
    <property type="entry name" value="50S ribosomal protein L16"/>
    <property type="match status" value="1"/>
</dbReference>
<dbReference type="Gene3D" id="3.90.1170.10">
    <property type="entry name" value="Ribosomal protein L10e/L16"/>
    <property type="match status" value="1"/>
</dbReference>
<dbReference type="HAMAP" id="MF_01342">
    <property type="entry name" value="Ribosomal_uL16"/>
    <property type="match status" value="1"/>
</dbReference>
<dbReference type="InterPro" id="IPR047873">
    <property type="entry name" value="Ribosomal_uL16"/>
</dbReference>
<dbReference type="InterPro" id="IPR000114">
    <property type="entry name" value="Ribosomal_uL16_bact-type"/>
</dbReference>
<dbReference type="InterPro" id="IPR020798">
    <property type="entry name" value="Ribosomal_uL16_CS"/>
</dbReference>
<dbReference type="InterPro" id="IPR016180">
    <property type="entry name" value="Ribosomal_uL16_dom"/>
</dbReference>
<dbReference type="InterPro" id="IPR036920">
    <property type="entry name" value="Ribosomal_uL16_sf"/>
</dbReference>
<dbReference type="NCBIfam" id="TIGR01164">
    <property type="entry name" value="rplP_bact"/>
    <property type="match status" value="1"/>
</dbReference>
<dbReference type="PANTHER" id="PTHR12220">
    <property type="entry name" value="50S/60S RIBOSOMAL PROTEIN L16"/>
    <property type="match status" value="1"/>
</dbReference>
<dbReference type="PANTHER" id="PTHR12220:SF13">
    <property type="entry name" value="LARGE RIBOSOMAL SUBUNIT PROTEIN UL16M"/>
    <property type="match status" value="1"/>
</dbReference>
<dbReference type="Pfam" id="PF00252">
    <property type="entry name" value="Ribosomal_L16"/>
    <property type="match status" value="1"/>
</dbReference>
<dbReference type="PRINTS" id="PR00060">
    <property type="entry name" value="RIBOSOMALL16"/>
</dbReference>
<dbReference type="SUPFAM" id="SSF54686">
    <property type="entry name" value="Ribosomal protein L16p/L10e"/>
    <property type="match status" value="1"/>
</dbReference>
<dbReference type="PROSITE" id="PS00586">
    <property type="entry name" value="RIBOSOMAL_L16_1"/>
    <property type="match status" value="1"/>
</dbReference>
<dbReference type="PROSITE" id="PS00701">
    <property type="entry name" value="RIBOSOMAL_L16_2"/>
    <property type="match status" value="1"/>
</dbReference>
<protein>
    <recommendedName>
        <fullName evidence="1">Large ribosomal subunit protein uL16</fullName>
    </recommendedName>
    <alternativeName>
        <fullName evidence="2">50S ribosomal protein L16</fullName>
    </alternativeName>
</protein>
<evidence type="ECO:0000255" key="1">
    <source>
        <dbReference type="HAMAP-Rule" id="MF_01342"/>
    </source>
</evidence>
<evidence type="ECO:0000305" key="2"/>
<keyword id="KW-0687">Ribonucleoprotein</keyword>
<keyword id="KW-0689">Ribosomal protein</keyword>
<keyword id="KW-0694">RNA-binding</keyword>
<keyword id="KW-0699">rRNA-binding</keyword>
<keyword id="KW-0820">tRNA-binding</keyword>
<gene>
    <name evidence="1" type="primary">rplP</name>
    <name type="ordered locus">M28_Spy0050</name>
</gene>
<feature type="chain" id="PRO_0000062221" description="Large ribosomal subunit protein uL16">
    <location>
        <begin position="1"/>
        <end position="137"/>
    </location>
</feature>
<proteinExistence type="inferred from homology"/>
<reference key="1">
    <citation type="journal article" date="2005" name="J. Infect. Dis.">
        <title>Genome sequence of a serotype M28 strain of group A Streptococcus: potential new insights into puerperal sepsis and bacterial disease specificity.</title>
        <authorList>
            <person name="Green N.M."/>
            <person name="Zhang S."/>
            <person name="Porcella S.F."/>
            <person name="Nagiec M.J."/>
            <person name="Barbian K.D."/>
            <person name="Beres S.B."/>
            <person name="Lefebvre R.B."/>
            <person name="Musser J.M."/>
        </authorList>
    </citation>
    <scope>NUCLEOTIDE SEQUENCE [LARGE SCALE GENOMIC DNA]</scope>
    <source>
        <strain>MGAS6180</strain>
    </source>
</reference>